<gene>
    <name type="ordered locus">FPV054</name>
    <name type="ORF">FP-D9</name>
    <name type="ORF">FPD9</name>
</gene>
<evidence type="ECO:0000250" key="1"/>
<evidence type="ECO:0000255" key="2">
    <source>
        <dbReference type="PROSITE-ProRule" id="PRU00794"/>
    </source>
</evidence>
<evidence type="ECO:0000305" key="3"/>
<organismHost>
    <name type="scientific">Vertebrata</name>
    <dbReference type="NCBI Taxonomy" id="7742"/>
</organismHost>
<name>D9_FOWPN</name>
<dbReference type="EC" id="3.6.-.-"/>
<dbReference type="EMBL" id="AF198100">
    <property type="protein sequence ID" value="AAF44398.1"/>
    <property type="molecule type" value="Genomic_DNA"/>
</dbReference>
<dbReference type="EMBL" id="X17202">
    <property type="protein sequence ID" value="CAA35072.1"/>
    <property type="molecule type" value="Genomic_DNA"/>
</dbReference>
<dbReference type="RefSeq" id="NP_039017.1">
    <property type="nucleotide sequence ID" value="NC_002188.1"/>
</dbReference>
<dbReference type="SMR" id="P21970"/>
<dbReference type="GeneID" id="1486602"/>
<dbReference type="KEGG" id="vg:1486602"/>
<dbReference type="Proteomes" id="UP000008597">
    <property type="component" value="Segment"/>
</dbReference>
<dbReference type="GO" id="GO:0016787">
    <property type="term" value="F:hydrolase activity"/>
    <property type="evidence" value="ECO:0007669"/>
    <property type="project" value="UniProtKB-KW"/>
</dbReference>
<dbReference type="GO" id="GO:0046872">
    <property type="term" value="F:metal ion binding"/>
    <property type="evidence" value="ECO:0007669"/>
    <property type="project" value="UniProtKB-KW"/>
</dbReference>
<dbReference type="GO" id="GO:0006260">
    <property type="term" value="P:DNA replication"/>
    <property type="evidence" value="ECO:0007669"/>
    <property type="project" value="UniProtKB-KW"/>
</dbReference>
<dbReference type="InterPro" id="IPR015797">
    <property type="entry name" value="NUDIX_hydrolase-like_dom_sf"/>
</dbReference>
<dbReference type="InterPro" id="IPR000086">
    <property type="entry name" value="NUDIX_hydrolase_dom"/>
</dbReference>
<dbReference type="InterPro" id="IPR003300">
    <property type="entry name" value="Viral_VD9"/>
</dbReference>
<dbReference type="PRINTS" id="PR01363">
    <property type="entry name" value="VD09PROTEIN"/>
</dbReference>
<dbReference type="SUPFAM" id="SSF55811">
    <property type="entry name" value="Nudix"/>
    <property type="match status" value="1"/>
</dbReference>
<dbReference type="PROSITE" id="PS51462">
    <property type="entry name" value="NUDIX"/>
    <property type="match status" value="1"/>
</dbReference>
<dbReference type="PROSITE" id="PS00893">
    <property type="entry name" value="NUDIX_BOX"/>
    <property type="match status" value="1"/>
</dbReference>
<feature type="chain" id="PRO_0000057090" description="Putative Nudix hydrolase FPV054">
    <location>
        <begin position="1"/>
        <end position="231"/>
    </location>
</feature>
<feature type="domain" description="Nudix hydrolase" evidence="2">
    <location>
        <begin position="74"/>
        <end position="217"/>
    </location>
</feature>
<feature type="short sequence motif" description="Nudix box">
    <location>
        <begin position="125"/>
        <end position="146"/>
    </location>
</feature>
<feature type="active site" description="Nucleophile" evidence="1">
    <location>
        <position position="140"/>
    </location>
</feature>
<feature type="binding site" evidence="1">
    <location>
        <position position="131"/>
    </location>
    <ligand>
        <name>Mg(2+)</name>
        <dbReference type="ChEBI" id="CHEBI:18420"/>
    </ligand>
</feature>
<feature type="binding site" evidence="1">
    <location>
        <position position="144"/>
    </location>
    <ligand>
        <name>Mg(2+)</name>
        <dbReference type="ChEBI" id="CHEBI:18420"/>
    </ligand>
</feature>
<feature type="binding site" evidence="1">
    <location>
        <position position="165"/>
    </location>
    <ligand>
        <name>Mg(2+)</name>
        <dbReference type="ChEBI" id="CHEBI:18420"/>
    </ligand>
</feature>
<accession>P21970</accession>
<accession>Q9J5F3</accession>
<reference key="1">
    <citation type="journal article" date="2000" name="J. Virol.">
        <title>The genome of fowlpox virus.</title>
        <authorList>
            <person name="Afonso C.L."/>
            <person name="Tulman E.R."/>
            <person name="Lu Z."/>
            <person name="Zsak L."/>
            <person name="Kutish G.F."/>
            <person name="Rock D.L."/>
        </authorList>
    </citation>
    <scope>NUCLEOTIDE SEQUENCE [LARGE SCALE GENOMIC DNA]</scope>
</reference>
<reference key="2">
    <citation type="journal article" date="1990" name="J. Gen. Virol.">
        <title>Nucleotide sequence analysis of a 10.5 kbp HindIII fragment of fowlpox virus: relatedness to the central portion of the vaccinia virus HindIII D region.</title>
        <authorList>
            <person name="Tartaglia J."/>
            <person name="Winslow J."/>
            <person name="Goebel S.J."/>
            <person name="Johnson G.P."/>
            <person name="Taylor J."/>
            <person name="Paoletti E."/>
        </authorList>
    </citation>
    <scope>NUCLEOTIDE SEQUENCE [GENOMIC DNA] OF 1-78</scope>
    <source>
        <strain>FP-1</strain>
    </source>
</reference>
<protein>
    <recommendedName>
        <fullName>Putative Nudix hydrolase FPV054</fullName>
        <ecNumber>3.6.-.-</ecNumber>
    </recommendedName>
</protein>
<comment type="function">
    <text evidence="1">Decapping enzyme required for the removal of the 5'-end m7GpppN cap tethered to viral and host mRNAs to allow their decay in cells. May therefore accelerate viral and cellular mRNA turnover to eliminate competing host mRNAs and allow stage-specific synthesis of viral proteins. Acceleration of the turnover of cellular transcripts may even promote the shutoff of host protein synthesis. Does not cleave unmethylated RNAs or RNAs shorter than 24 nucleotides (By similarity).</text>
</comment>
<comment type="cofactor">
    <cofactor evidence="1">
        <name>Mg(2+)</name>
        <dbReference type="ChEBI" id="CHEBI:18420"/>
    </cofactor>
    <cofactor evidence="1">
        <name>Mn(2+)</name>
        <dbReference type="ChEBI" id="CHEBI:29035"/>
    </cofactor>
</comment>
<comment type="induction">
    <text>Expressed in the early phase of the viral replicative cycle.</text>
</comment>
<comment type="similarity">
    <text evidence="3">Belongs to the Nudix hydrolase family.</text>
</comment>
<keyword id="KW-0235">DNA replication</keyword>
<keyword id="KW-0378">Hydrolase</keyword>
<keyword id="KW-0460">Magnesium</keyword>
<keyword id="KW-0464">Manganese</keyword>
<keyword id="KW-0479">Metal-binding</keyword>
<keyword id="KW-1185">Reference proteome</keyword>
<organism>
    <name type="scientific">Fowlpox virus (strain NVSL)</name>
    <name type="common">FPV</name>
    <dbReference type="NCBI Taxonomy" id="928301"/>
    <lineage>
        <taxon>Viruses</taxon>
        <taxon>Varidnaviria</taxon>
        <taxon>Bamfordvirae</taxon>
        <taxon>Nucleocytoviricota</taxon>
        <taxon>Pokkesviricetes</taxon>
        <taxon>Chitovirales</taxon>
        <taxon>Poxviridae</taxon>
        <taxon>Chordopoxvirinae</taxon>
        <taxon>Avipoxvirus</taxon>
        <taxon>Fowlpox virus</taxon>
    </lineage>
</organism>
<sequence>MFDISREQQNMLEKNKDCVITFETNRERITIENTNIKDILSDRRIHIFALCITSDNIPIIGIRRTSFMYQSVISKRRSFSEILAVDINHLKYMYNNEIKEICIRSIVPFTYSGFNNFEELVLLGGRVKNKESIYQCLSRELSEESDGILTIKTFGNKILKLTIEDKILRRTFYGYCIVCFIDQLYSEIIKPLYNIEIKELGSLFDRSSNEKYEYLHFIYNTLLTYKYGGVL</sequence>
<proteinExistence type="evidence at transcript level"/>